<comment type="function">
    <text evidence="1">DNA-dependent RNA polymerase catalyzes the transcription of DNA into RNA using the four ribonucleoside triphosphates as substrates.</text>
</comment>
<comment type="catalytic activity">
    <reaction evidence="1">
        <text>RNA(n) + a ribonucleoside 5'-triphosphate = RNA(n+1) + diphosphate</text>
        <dbReference type="Rhea" id="RHEA:21248"/>
        <dbReference type="Rhea" id="RHEA-COMP:14527"/>
        <dbReference type="Rhea" id="RHEA-COMP:17342"/>
        <dbReference type="ChEBI" id="CHEBI:33019"/>
        <dbReference type="ChEBI" id="CHEBI:61557"/>
        <dbReference type="ChEBI" id="CHEBI:140395"/>
        <dbReference type="EC" id="2.7.7.6"/>
    </reaction>
</comment>
<comment type="cofactor">
    <cofactor evidence="1">
        <name>Zn(2+)</name>
        <dbReference type="ChEBI" id="CHEBI:29105"/>
    </cofactor>
    <text evidence="1">Binds 1 Zn(2+) ion per subunit.</text>
</comment>
<comment type="subunit">
    <text evidence="1">In plastids the minimal PEP RNA polymerase catalytic core is composed of four subunits: alpha, beta, beta', and beta''. When a (nuclear-encoded) sigma factor is associated with the core the holoenzyme is formed, which can initiate transcription.</text>
</comment>
<comment type="subcellular location">
    <subcellularLocation>
        <location evidence="1">Plastid</location>
        <location evidence="1">Chloroplast</location>
    </subcellularLocation>
</comment>
<comment type="similarity">
    <text evidence="1">Belongs to the RNA polymerase beta' chain family. RpoC2 subfamily.</text>
</comment>
<proteinExistence type="inferred from homology"/>
<gene>
    <name evidence="1" type="primary">rpoC2</name>
</gene>
<name>RPOC2_POPAL</name>
<geneLocation type="chloroplast"/>
<keyword id="KW-0150">Chloroplast</keyword>
<keyword id="KW-0240">DNA-directed RNA polymerase</keyword>
<keyword id="KW-0479">Metal-binding</keyword>
<keyword id="KW-0548">Nucleotidyltransferase</keyword>
<keyword id="KW-0934">Plastid</keyword>
<keyword id="KW-0804">Transcription</keyword>
<keyword id="KW-0808">Transferase</keyword>
<keyword id="KW-0862">Zinc</keyword>
<feature type="chain" id="PRO_0000277199" description="DNA-directed RNA polymerase subunit beta''">
    <location>
        <begin position="1"/>
        <end position="1390"/>
    </location>
</feature>
<feature type="binding site" evidence="1">
    <location>
        <position position="220"/>
    </location>
    <ligand>
        <name>Zn(2+)</name>
        <dbReference type="ChEBI" id="CHEBI:29105"/>
    </ligand>
</feature>
<feature type="binding site" evidence="1">
    <location>
        <position position="291"/>
    </location>
    <ligand>
        <name>Zn(2+)</name>
        <dbReference type="ChEBI" id="CHEBI:29105"/>
    </ligand>
</feature>
<feature type="binding site" evidence="1">
    <location>
        <position position="298"/>
    </location>
    <ligand>
        <name>Zn(2+)</name>
        <dbReference type="ChEBI" id="CHEBI:29105"/>
    </ligand>
</feature>
<feature type="binding site" evidence="1">
    <location>
        <position position="301"/>
    </location>
    <ligand>
        <name>Zn(2+)</name>
        <dbReference type="ChEBI" id="CHEBI:29105"/>
    </ligand>
</feature>
<sequence>MAERANLFFHNKVIDGTAIKRIISRFIDHFGMAYTSHILDQVKTLGFHQATATSISLGIDDLLTIPSKGWLVQDAEQQSLILEKHHHYGNVHAIEKLRQSIEIWYATSEYLRQEMNPNFRMTEPFNPVHIMSFSGARGNASQVHQLVGMRGLMSDPQGQMIDLPIQSNLREGLSLTEYIISCYGARKGVVDTAVRTSDAGYLTRRLVEVVQHIVVRRTDCGTTRGISVSSRNGMIPERIFIQTLIGRVLADNIYMGLRCIATRNQDIGIGLVNRFITFRTQPISIRTPFTCRSTSWICRLCYGRSPTHGDLVELGEAVGIIAGQSIGEPGTQLTLRTFHTGGVFTGGTAEHVRAPSNGKIKFNKGLVHPTRTRHGHPAFLCSMDLYVTIESQDIIHNVTIPPKSFLLVQNDQYVESEQVIAEIRSGTYTLNFTERVRKHIYSDSEGEMHWSTDVYHASEFTYSNVHLLPKTSHLWILSGGSCRSSIVPFSLHKDQDQINVHSLSVERGYISNPSENNDKVKHKFFSSYLSSKSKKKSRILDYSDLNRIICTGFIYPTILHENSDLLAKRRKNRFIIPFQSIQEKELMSHSDILIEIPINGIFRRNSIFAYFDDPQYRRKSSGITKYVAIGVHSIVKKEDLVEYRGVKEFQPKYQMKVDRFFFIPEEVYILPESSSLMVRNNSIIGVDTQITLNTKSRVGGLIRIERKKKKMELKIFSGDIHFPRATDKISRYSGILIPPGTVKTNSKESKKVKNWIYVQRITPTKKKSFVLVRPVLIYERGDGINLERLFPPDLLQEKENLKLRIVNYILYGNGKPIQGISNTSIQLVRTCLVLNWNQDKKSSSIEEARVYFVEVSINGLIRDFLRIHLGKSRISYISRKRNDPSGLGLISDNGPDRTNINPFYSIYSKTRIPQSLKQNQGTISISTLLNRNMECQSLIILSSSNCFRMDPSNGVKSYNVIKESTKRDPIIPIRNLLGPLGTTLQIANFYSFYHLLTHNQISVIKYLKLDNLKLKQTSKVLKYYLMDENGRIVNHDPYSNNVLNPFKLNWYFLHHNYHHNYCEETFTIINLGQFICENVCMTKNGPRLKSGQVLIVHADSVILRLAKPYLATPGATVHGHYGEILYEGDTLVTFIYEKSRSGDITQGLPKVEQVLEVRSIDSISINLEKRVENWNECITRIVGIPWGFLIGAELTIVQSRISLVNKIQKVYRSQGVQIHNRHIEIIVRQITSKVLVSEDGMSNVFSPGELIGLLRAERAMRALEEAICYRTVFLGITRASLSTQSFISEASFQETARVLAKAALRGRIDWLKGLKENVVLGGMIPVGTGFKGLAHRSSQHKIIPFKIKKKNLFAGEMRDILFHHRELFDSCISKNFYNISEQSFIGFNDS</sequence>
<dbReference type="EC" id="2.7.7.6" evidence="1"/>
<dbReference type="EMBL" id="AP008956">
    <property type="protein sequence ID" value="BAE97195.1"/>
    <property type="molecule type" value="Genomic_DNA"/>
</dbReference>
<dbReference type="RefSeq" id="YP_665548.1">
    <property type="nucleotide sequence ID" value="NC_008235.1"/>
</dbReference>
<dbReference type="SMR" id="Q14FG7"/>
<dbReference type="GeneID" id="4178256"/>
<dbReference type="KEGG" id="palz:4178256"/>
<dbReference type="OrthoDB" id="7353at3646"/>
<dbReference type="GO" id="GO:0009507">
    <property type="term" value="C:chloroplast"/>
    <property type="evidence" value="ECO:0007669"/>
    <property type="project" value="UniProtKB-SubCell"/>
</dbReference>
<dbReference type="GO" id="GO:0000428">
    <property type="term" value="C:DNA-directed RNA polymerase complex"/>
    <property type="evidence" value="ECO:0007669"/>
    <property type="project" value="UniProtKB-KW"/>
</dbReference>
<dbReference type="GO" id="GO:0005739">
    <property type="term" value="C:mitochondrion"/>
    <property type="evidence" value="ECO:0007669"/>
    <property type="project" value="GOC"/>
</dbReference>
<dbReference type="GO" id="GO:0003677">
    <property type="term" value="F:DNA binding"/>
    <property type="evidence" value="ECO:0007669"/>
    <property type="project" value="UniProtKB-UniRule"/>
</dbReference>
<dbReference type="GO" id="GO:0003899">
    <property type="term" value="F:DNA-directed RNA polymerase activity"/>
    <property type="evidence" value="ECO:0007669"/>
    <property type="project" value="UniProtKB-UniRule"/>
</dbReference>
<dbReference type="GO" id="GO:0008270">
    <property type="term" value="F:zinc ion binding"/>
    <property type="evidence" value="ECO:0007669"/>
    <property type="project" value="UniProtKB-UniRule"/>
</dbReference>
<dbReference type="GO" id="GO:0006351">
    <property type="term" value="P:DNA-templated transcription"/>
    <property type="evidence" value="ECO:0007669"/>
    <property type="project" value="UniProtKB-UniRule"/>
</dbReference>
<dbReference type="CDD" id="cd02655">
    <property type="entry name" value="RNAP_beta'_C"/>
    <property type="match status" value="1"/>
</dbReference>
<dbReference type="FunFam" id="1.10.132.30:FF:000002">
    <property type="entry name" value="DNA-directed RNA polymerase subunit beta"/>
    <property type="match status" value="1"/>
</dbReference>
<dbReference type="Gene3D" id="1.10.132.30">
    <property type="match status" value="1"/>
</dbReference>
<dbReference type="Gene3D" id="1.10.150.390">
    <property type="match status" value="1"/>
</dbReference>
<dbReference type="Gene3D" id="1.10.1790.20">
    <property type="match status" value="1"/>
</dbReference>
<dbReference type="Gene3D" id="1.10.274.100">
    <property type="entry name" value="RNA polymerase Rpb1, domain 3"/>
    <property type="match status" value="1"/>
</dbReference>
<dbReference type="HAMAP" id="MF_01324">
    <property type="entry name" value="RNApol_bact_RpoC2"/>
    <property type="match status" value="1"/>
</dbReference>
<dbReference type="InterPro" id="IPR012756">
    <property type="entry name" value="DNA-dir_RpoC2_beta_pp"/>
</dbReference>
<dbReference type="InterPro" id="IPR050254">
    <property type="entry name" value="RNA_pol_beta''_euk"/>
</dbReference>
<dbReference type="InterPro" id="IPR042102">
    <property type="entry name" value="RNA_pol_Rpb1_3_sf"/>
</dbReference>
<dbReference type="InterPro" id="IPR007083">
    <property type="entry name" value="RNA_pol_Rpb1_4"/>
</dbReference>
<dbReference type="InterPro" id="IPR007081">
    <property type="entry name" value="RNA_pol_Rpb1_5"/>
</dbReference>
<dbReference type="InterPro" id="IPR038120">
    <property type="entry name" value="Rpb1_funnel_sf"/>
</dbReference>
<dbReference type="NCBIfam" id="TIGR02388">
    <property type="entry name" value="rpoC2_cyan"/>
    <property type="match status" value="1"/>
</dbReference>
<dbReference type="PANTHER" id="PTHR34995">
    <property type="entry name" value="DNA-DIRECTED RNA POLYMERASE SUBUNIT BETA"/>
    <property type="match status" value="1"/>
</dbReference>
<dbReference type="PANTHER" id="PTHR34995:SF1">
    <property type="entry name" value="DNA-DIRECTED RNA POLYMERASE SUBUNIT BETA"/>
    <property type="match status" value="1"/>
</dbReference>
<dbReference type="Pfam" id="PF05000">
    <property type="entry name" value="RNA_pol_Rpb1_4"/>
    <property type="match status" value="1"/>
</dbReference>
<dbReference type="Pfam" id="PF04998">
    <property type="entry name" value="RNA_pol_Rpb1_5"/>
    <property type="match status" value="2"/>
</dbReference>
<dbReference type="SUPFAM" id="SSF64484">
    <property type="entry name" value="beta and beta-prime subunits of DNA dependent RNA-polymerase"/>
    <property type="match status" value="1"/>
</dbReference>
<accession>Q14FG7</accession>
<evidence type="ECO:0000255" key="1">
    <source>
        <dbReference type="HAMAP-Rule" id="MF_01324"/>
    </source>
</evidence>
<organism>
    <name type="scientific">Populus alba</name>
    <name type="common">White poplar</name>
    <dbReference type="NCBI Taxonomy" id="43335"/>
    <lineage>
        <taxon>Eukaryota</taxon>
        <taxon>Viridiplantae</taxon>
        <taxon>Streptophyta</taxon>
        <taxon>Embryophyta</taxon>
        <taxon>Tracheophyta</taxon>
        <taxon>Spermatophyta</taxon>
        <taxon>Magnoliopsida</taxon>
        <taxon>eudicotyledons</taxon>
        <taxon>Gunneridae</taxon>
        <taxon>Pentapetalae</taxon>
        <taxon>rosids</taxon>
        <taxon>fabids</taxon>
        <taxon>Malpighiales</taxon>
        <taxon>Salicaceae</taxon>
        <taxon>Saliceae</taxon>
        <taxon>Populus</taxon>
    </lineage>
</organism>
<protein>
    <recommendedName>
        <fullName evidence="1">DNA-directed RNA polymerase subunit beta''</fullName>
        <ecNumber evidence="1">2.7.7.6</ecNumber>
    </recommendedName>
    <alternativeName>
        <fullName evidence="1">PEP</fullName>
    </alternativeName>
    <alternativeName>
        <fullName evidence="1">Plastid-encoded RNA polymerase subunit beta''</fullName>
        <shortName evidence="1">RNA polymerase subunit beta''</shortName>
    </alternativeName>
</protein>
<reference key="1">
    <citation type="submission" date="2005-03" db="EMBL/GenBank/DDBJ databases">
        <title>Complete structure of the chloroplast genome of Populus alba.</title>
        <authorList>
            <person name="Okumura S."/>
            <person name="Yamashita A."/>
            <person name="Kanamoto H."/>
            <person name="Hattori M."/>
            <person name="Takase H."/>
            <person name="Tomizawa K."/>
        </authorList>
    </citation>
    <scope>NUCLEOTIDE SEQUENCE [LARGE SCALE GENOMIC DNA]</scope>
</reference>